<name>RBS_PROMM</name>
<organism>
    <name type="scientific">Prochlorococcus marinus (strain MIT 9313)</name>
    <dbReference type="NCBI Taxonomy" id="74547"/>
    <lineage>
        <taxon>Bacteria</taxon>
        <taxon>Bacillati</taxon>
        <taxon>Cyanobacteriota</taxon>
        <taxon>Cyanophyceae</taxon>
        <taxon>Synechococcales</taxon>
        <taxon>Prochlorococcaceae</taxon>
        <taxon>Prochlorococcus</taxon>
    </lineage>
</organism>
<comment type="function">
    <text evidence="1">RuBisCO catalyzes two reactions: the carboxylation of D-ribulose 1,5-bisphosphate, the primary event in carbon dioxide fixation, as well as the oxidative fragmentation of the pentose substrate in the photorespiration process. Both reactions occur simultaneously and in competition at the same active site. Although the small subunit is not catalytic it is essential for maximal activity.</text>
</comment>
<comment type="subunit">
    <text evidence="1 4">Heterohexadecamer of 8 large and 8 small subunits. Forms a CsoS2-CsoS1-RuBisCO complex (Probable).</text>
</comment>
<comment type="subcellular location">
    <subcellularLocation>
        <location evidence="1 4">Carboxysome</location>
    </subcellularLocation>
    <text evidence="2">This bacterium makes alpha-type carboxysomes.</text>
</comment>
<comment type="miscellaneous">
    <text evidence="1">The basic functional RuBisCO is composed of a large chain homodimer in a 'head-to-tail' conformation. In form I RuBisCO this homodimer is arranged in a barrel-like tetramer with the small subunits forming a tetrameric 'cap' on each end of the 'barrel'.</text>
</comment>
<comment type="similarity">
    <text evidence="1">Belongs to the RuBisCO small chain family.</text>
</comment>
<dbReference type="EMBL" id="BX548175">
    <property type="protein sequence ID" value="CAE21379.1"/>
    <property type="molecule type" value="Genomic_DNA"/>
</dbReference>
<dbReference type="RefSeq" id="WP_011130575.1">
    <property type="nucleotide sequence ID" value="NC_005071.1"/>
</dbReference>
<dbReference type="SMR" id="Q7V6F9"/>
<dbReference type="KEGG" id="pmt:PMT_1204"/>
<dbReference type="eggNOG" id="COG4451">
    <property type="taxonomic scope" value="Bacteria"/>
</dbReference>
<dbReference type="HOGENOM" id="CLU_098114_2_0_3"/>
<dbReference type="OrthoDB" id="9788955at2"/>
<dbReference type="Proteomes" id="UP000001423">
    <property type="component" value="Chromosome"/>
</dbReference>
<dbReference type="GO" id="GO:0031470">
    <property type="term" value="C:carboxysome"/>
    <property type="evidence" value="ECO:0007669"/>
    <property type="project" value="UniProtKB-SubCell"/>
</dbReference>
<dbReference type="GO" id="GO:0016984">
    <property type="term" value="F:ribulose-bisphosphate carboxylase activity"/>
    <property type="evidence" value="ECO:0007669"/>
    <property type="project" value="UniProtKB-UniRule"/>
</dbReference>
<dbReference type="GO" id="GO:0009853">
    <property type="term" value="P:photorespiration"/>
    <property type="evidence" value="ECO:0007669"/>
    <property type="project" value="UniProtKB-KW"/>
</dbReference>
<dbReference type="GO" id="GO:0019253">
    <property type="term" value="P:reductive pentose-phosphate cycle"/>
    <property type="evidence" value="ECO:0007669"/>
    <property type="project" value="UniProtKB-UniRule"/>
</dbReference>
<dbReference type="CDD" id="cd03527">
    <property type="entry name" value="RuBisCO_small"/>
    <property type="match status" value="1"/>
</dbReference>
<dbReference type="Gene3D" id="3.30.190.10">
    <property type="entry name" value="Ribulose bisphosphate carboxylase, small subunit"/>
    <property type="match status" value="1"/>
</dbReference>
<dbReference type="HAMAP" id="MF_00859">
    <property type="entry name" value="RuBisCO_S_bact"/>
    <property type="match status" value="1"/>
</dbReference>
<dbReference type="InterPro" id="IPR024681">
    <property type="entry name" value="RuBisCO_ssu"/>
</dbReference>
<dbReference type="InterPro" id="IPR000894">
    <property type="entry name" value="RuBisCO_ssu_dom"/>
</dbReference>
<dbReference type="InterPro" id="IPR036385">
    <property type="entry name" value="RuBisCO_ssu_sf"/>
</dbReference>
<dbReference type="PANTHER" id="PTHR31262">
    <property type="entry name" value="RIBULOSE BISPHOSPHATE CARBOXYLASE SMALL CHAIN 1, CHLOROPLASTIC"/>
    <property type="match status" value="1"/>
</dbReference>
<dbReference type="Pfam" id="PF00101">
    <property type="entry name" value="RuBisCO_small"/>
    <property type="match status" value="1"/>
</dbReference>
<dbReference type="SMART" id="SM00961">
    <property type="entry name" value="RuBisCO_small"/>
    <property type="match status" value="1"/>
</dbReference>
<dbReference type="SUPFAM" id="SSF55239">
    <property type="entry name" value="RuBisCO, small subunit"/>
    <property type="match status" value="1"/>
</dbReference>
<protein>
    <recommendedName>
        <fullName evidence="1">Ribulose bisphosphate carboxylase small subunit</fullName>
        <shortName evidence="1">RuBisCO small subunit</shortName>
    </recommendedName>
</protein>
<feature type="chain" id="PRO_0000452048" description="Ribulose bisphosphate carboxylase small subunit">
    <location>
        <begin position="1"/>
        <end position="113"/>
    </location>
</feature>
<proteinExistence type="evidence at protein level"/>
<gene>
    <name evidence="1 3" type="primary">cbbS</name>
    <name evidence="1" type="synonym">rbcS</name>
    <name type="ordered locus">PMT_1204</name>
</gene>
<reference key="1">
    <citation type="journal article" date="2003" name="Nature">
        <title>Genome divergence in two Prochlorococcus ecotypes reflects oceanic niche differentiation.</title>
        <authorList>
            <person name="Rocap G."/>
            <person name="Larimer F.W."/>
            <person name="Lamerdin J.E."/>
            <person name="Malfatti S."/>
            <person name="Chain P."/>
            <person name="Ahlgren N.A."/>
            <person name="Arellano A."/>
            <person name="Coleman M."/>
            <person name="Hauser L."/>
            <person name="Hess W.R."/>
            <person name="Johnson Z.I."/>
            <person name="Land M.L."/>
            <person name="Lindell D."/>
            <person name="Post A.F."/>
            <person name="Regala W."/>
            <person name="Shah M."/>
            <person name="Shaw S.L."/>
            <person name="Steglich C."/>
            <person name="Sullivan M.B."/>
            <person name="Ting C.S."/>
            <person name="Tolonen A."/>
            <person name="Webb E.A."/>
            <person name="Zinser E.R."/>
            <person name="Chisholm S.W."/>
        </authorList>
    </citation>
    <scope>NUCLEOTIDE SEQUENCE [LARGE SCALE GENOMIC DNA]</scope>
    <source>
        <strain>MIT 9313</strain>
    </source>
</reference>
<reference key="2">
    <citation type="journal article" date="2015" name="Life">
        <title>Advances in Understanding Carboxysome Assembly in Prochlorococcus and Synechococcus Implicate CsoS2 as a Critical Component.</title>
        <authorList>
            <person name="Cai F."/>
            <person name="Dou Z."/>
            <person name="Bernstein S.L."/>
            <person name="Leverenz R."/>
            <person name="Williams E.B."/>
            <person name="Heinhorst S."/>
            <person name="Shively J."/>
            <person name="Cannon G.C."/>
            <person name="Kerfeld C.A."/>
        </authorList>
    </citation>
    <scope>SUBUNIT</scope>
    <source>
        <strain>MIT 9313</strain>
    </source>
</reference>
<evidence type="ECO:0000255" key="1">
    <source>
        <dbReference type="HAMAP-Rule" id="MF_00859"/>
    </source>
</evidence>
<evidence type="ECO:0000269" key="2">
    <source>
    </source>
</evidence>
<evidence type="ECO:0000303" key="3">
    <source>
    </source>
</evidence>
<evidence type="ECO:0000305" key="4">
    <source>
    </source>
</evidence>
<keyword id="KW-1283">Bacterial microcompartment</keyword>
<keyword id="KW-0113">Calvin cycle</keyword>
<keyword id="KW-0120">Carbon dioxide fixation</keyword>
<keyword id="KW-1282">Carboxysome</keyword>
<keyword id="KW-0601">Photorespiration</keyword>
<keyword id="KW-0602">Photosynthesis</keyword>
<keyword id="KW-1185">Reference proteome</keyword>
<accession>Q7V6F9</accession>
<sequence>MPFQSTVGDYQTVATLETFGFLPPMTQDEIYDQIAYIIAQGWSPVIEHVHPSGSMQTYWSYWKLPFFGEKDLNMVVSELEACHRAYPDHHVRMVGYDAYTQSQGTAFVVFEGR</sequence>